<proteinExistence type="inferred from homology"/>
<keyword id="KW-1185">Reference proteome</keyword>
<keyword id="KW-0686">Riboflavin biosynthesis</keyword>
<keyword id="KW-0808">Transferase</keyword>
<accession>Q7NVF3</accession>
<feature type="chain" id="PRO_0000134742" description="6,7-dimethyl-8-ribityllumazine synthase">
    <location>
        <begin position="1"/>
        <end position="155"/>
    </location>
</feature>
<feature type="active site" description="Proton donor" evidence="1">
    <location>
        <position position="92"/>
    </location>
</feature>
<feature type="binding site" evidence="1">
    <location>
        <position position="26"/>
    </location>
    <ligand>
        <name>5-amino-6-(D-ribitylamino)uracil</name>
        <dbReference type="ChEBI" id="CHEBI:15934"/>
    </ligand>
</feature>
<feature type="binding site" evidence="1">
    <location>
        <begin position="60"/>
        <end position="62"/>
    </location>
    <ligand>
        <name>5-amino-6-(D-ribitylamino)uracil</name>
        <dbReference type="ChEBI" id="CHEBI:15934"/>
    </ligand>
</feature>
<feature type="binding site" evidence="1">
    <location>
        <begin position="84"/>
        <end position="86"/>
    </location>
    <ligand>
        <name>5-amino-6-(D-ribitylamino)uracil</name>
        <dbReference type="ChEBI" id="CHEBI:15934"/>
    </ligand>
</feature>
<feature type="binding site" evidence="1">
    <location>
        <begin position="89"/>
        <end position="90"/>
    </location>
    <ligand>
        <name>(2S)-2-hydroxy-3-oxobutyl phosphate</name>
        <dbReference type="ChEBI" id="CHEBI:58830"/>
    </ligand>
</feature>
<feature type="binding site" evidence="1">
    <location>
        <position position="117"/>
    </location>
    <ligand>
        <name>5-amino-6-(D-ribitylamino)uracil</name>
        <dbReference type="ChEBI" id="CHEBI:15934"/>
    </ligand>
</feature>
<feature type="binding site" evidence="1">
    <location>
        <position position="131"/>
    </location>
    <ligand>
        <name>(2S)-2-hydroxy-3-oxobutyl phosphate</name>
        <dbReference type="ChEBI" id="CHEBI:58830"/>
    </ligand>
</feature>
<dbReference type="EC" id="2.5.1.78" evidence="1"/>
<dbReference type="EMBL" id="AE016825">
    <property type="protein sequence ID" value="AAQ60062.1"/>
    <property type="molecule type" value="Genomic_DNA"/>
</dbReference>
<dbReference type="RefSeq" id="WP_011135937.1">
    <property type="nucleotide sequence ID" value="NC_005085.1"/>
</dbReference>
<dbReference type="SMR" id="Q7NVF3"/>
<dbReference type="STRING" id="243365.CV_2390"/>
<dbReference type="KEGG" id="cvi:CV_2390"/>
<dbReference type="eggNOG" id="COG0054">
    <property type="taxonomic scope" value="Bacteria"/>
</dbReference>
<dbReference type="HOGENOM" id="CLU_089358_1_2_4"/>
<dbReference type="OrthoDB" id="9809709at2"/>
<dbReference type="UniPathway" id="UPA00275">
    <property type="reaction ID" value="UER00404"/>
</dbReference>
<dbReference type="Proteomes" id="UP000001424">
    <property type="component" value="Chromosome"/>
</dbReference>
<dbReference type="GO" id="GO:0005829">
    <property type="term" value="C:cytosol"/>
    <property type="evidence" value="ECO:0007669"/>
    <property type="project" value="TreeGrafter"/>
</dbReference>
<dbReference type="GO" id="GO:0009349">
    <property type="term" value="C:riboflavin synthase complex"/>
    <property type="evidence" value="ECO:0007669"/>
    <property type="project" value="InterPro"/>
</dbReference>
<dbReference type="GO" id="GO:0000906">
    <property type="term" value="F:6,7-dimethyl-8-ribityllumazine synthase activity"/>
    <property type="evidence" value="ECO:0007669"/>
    <property type="project" value="UniProtKB-UniRule"/>
</dbReference>
<dbReference type="GO" id="GO:0009231">
    <property type="term" value="P:riboflavin biosynthetic process"/>
    <property type="evidence" value="ECO:0007669"/>
    <property type="project" value="UniProtKB-UniRule"/>
</dbReference>
<dbReference type="CDD" id="cd09209">
    <property type="entry name" value="Lumazine_synthase-I"/>
    <property type="match status" value="1"/>
</dbReference>
<dbReference type="Gene3D" id="3.40.50.960">
    <property type="entry name" value="Lumazine/riboflavin synthase"/>
    <property type="match status" value="1"/>
</dbReference>
<dbReference type="HAMAP" id="MF_00178">
    <property type="entry name" value="Lumazine_synth"/>
    <property type="match status" value="1"/>
</dbReference>
<dbReference type="InterPro" id="IPR034964">
    <property type="entry name" value="LS"/>
</dbReference>
<dbReference type="InterPro" id="IPR002180">
    <property type="entry name" value="LS/RS"/>
</dbReference>
<dbReference type="InterPro" id="IPR036467">
    <property type="entry name" value="LS/RS_sf"/>
</dbReference>
<dbReference type="NCBIfam" id="TIGR00114">
    <property type="entry name" value="lumazine-synth"/>
    <property type="match status" value="1"/>
</dbReference>
<dbReference type="PANTHER" id="PTHR21058:SF0">
    <property type="entry name" value="6,7-DIMETHYL-8-RIBITYLLUMAZINE SYNTHASE"/>
    <property type="match status" value="1"/>
</dbReference>
<dbReference type="PANTHER" id="PTHR21058">
    <property type="entry name" value="6,7-DIMETHYL-8-RIBITYLLUMAZINE SYNTHASE DMRL SYNTHASE LUMAZINE SYNTHASE"/>
    <property type="match status" value="1"/>
</dbReference>
<dbReference type="Pfam" id="PF00885">
    <property type="entry name" value="DMRL_synthase"/>
    <property type="match status" value="1"/>
</dbReference>
<dbReference type="SUPFAM" id="SSF52121">
    <property type="entry name" value="Lumazine synthase"/>
    <property type="match status" value="1"/>
</dbReference>
<evidence type="ECO:0000255" key="1">
    <source>
        <dbReference type="HAMAP-Rule" id="MF_00178"/>
    </source>
</evidence>
<organism>
    <name type="scientific">Chromobacterium violaceum (strain ATCC 12472 / DSM 30191 / JCM 1249 / CCUG 213 / NBRC 12614 / NCIMB 9131 / NCTC 9757 / MK)</name>
    <dbReference type="NCBI Taxonomy" id="243365"/>
    <lineage>
        <taxon>Bacteria</taxon>
        <taxon>Pseudomonadati</taxon>
        <taxon>Pseudomonadota</taxon>
        <taxon>Betaproteobacteria</taxon>
        <taxon>Neisseriales</taxon>
        <taxon>Chromobacteriaceae</taxon>
        <taxon>Chromobacterium</taxon>
    </lineage>
</organism>
<protein>
    <recommendedName>
        <fullName evidence="1">6,7-dimethyl-8-ribityllumazine synthase</fullName>
        <shortName evidence="1">DMRL synthase</shortName>
        <shortName evidence="1">LS</shortName>
        <shortName evidence="1">Lumazine synthase</shortName>
        <ecNumber evidence="1">2.5.1.78</ecNumber>
    </recommendedName>
</protein>
<name>RISB_CHRVO</name>
<comment type="function">
    <text evidence="1">Catalyzes the formation of 6,7-dimethyl-8-ribityllumazine by condensation of 5-amino-6-(D-ribitylamino)uracil with 3,4-dihydroxy-2-butanone 4-phosphate. This is the penultimate step in the biosynthesis of riboflavin.</text>
</comment>
<comment type="catalytic activity">
    <reaction evidence="1">
        <text>(2S)-2-hydroxy-3-oxobutyl phosphate + 5-amino-6-(D-ribitylamino)uracil = 6,7-dimethyl-8-(1-D-ribityl)lumazine + phosphate + 2 H2O + H(+)</text>
        <dbReference type="Rhea" id="RHEA:26152"/>
        <dbReference type="ChEBI" id="CHEBI:15377"/>
        <dbReference type="ChEBI" id="CHEBI:15378"/>
        <dbReference type="ChEBI" id="CHEBI:15934"/>
        <dbReference type="ChEBI" id="CHEBI:43474"/>
        <dbReference type="ChEBI" id="CHEBI:58201"/>
        <dbReference type="ChEBI" id="CHEBI:58830"/>
        <dbReference type="EC" id="2.5.1.78"/>
    </reaction>
</comment>
<comment type="pathway">
    <text evidence="1">Cofactor biosynthesis; riboflavin biosynthesis; riboflavin from 2-hydroxy-3-oxobutyl phosphate and 5-amino-6-(D-ribitylamino)uracil: step 1/2.</text>
</comment>
<comment type="similarity">
    <text evidence="1">Belongs to the DMRL synthase family.</text>
</comment>
<gene>
    <name evidence="1" type="primary">ribH</name>
    <name type="ordered locus">CV_2390</name>
</gene>
<sequence>MLDAIQCIEPNFSGKGLKIGIAMARFNTPVCHGLRDACLAELEKLGVAAGDITLATVPGALEVPLVLQTMAKSGRFDALVALGAVIRGETYHFELVSNESGAGVTRVGLDFDIPVANAILTTENDEQAEVRMLEKGGDAARVAVEMANLHKTLRG</sequence>
<reference key="1">
    <citation type="journal article" date="2003" name="Proc. Natl. Acad. Sci. U.S.A.">
        <title>The complete genome sequence of Chromobacterium violaceum reveals remarkable and exploitable bacterial adaptability.</title>
        <authorList>
            <person name="Vasconcelos A.T.R."/>
            <person name="de Almeida D.F."/>
            <person name="Hungria M."/>
            <person name="Guimaraes C.T."/>
            <person name="Antonio R.V."/>
            <person name="Almeida F.C."/>
            <person name="de Almeida L.G.P."/>
            <person name="de Almeida R."/>
            <person name="Alves-Gomes J.A."/>
            <person name="Andrade E.M."/>
            <person name="Araripe J."/>
            <person name="de Araujo M.F.F."/>
            <person name="Astolfi-Filho S."/>
            <person name="Azevedo V."/>
            <person name="Baptista A.J."/>
            <person name="Bataus L.A.M."/>
            <person name="Batista J.S."/>
            <person name="Belo A."/>
            <person name="van den Berg C."/>
            <person name="Bogo M."/>
            <person name="Bonatto S."/>
            <person name="Bordignon J."/>
            <person name="Brigido M.M."/>
            <person name="Brito C.A."/>
            <person name="Brocchi M."/>
            <person name="Burity H.A."/>
            <person name="Camargo A.A."/>
            <person name="Cardoso D.D.P."/>
            <person name="Carneiro N.P."/>
            <person name="Carraro D.M."/>
            <person name="Carvalho C.M.B."/>
            <person name="Cascardo J.C.M."/>
            <person name="Cavada B.S."/>
            <person name="Chueire L.M.O."/>
            <person name="Creczynski-Pasa T.B."/>
            <person name="Cunha-Junior N.C."/>
            <person name="Fagundes N."/>
            <person name="Falcao C.L."/>
            <person name="Fantinatti F."/>
            <person name="Farias I.P."/>
            <person name="Felipe M.S.S."/>
            <person name="Ferrari L.P."/>
            <person name="Ferro J.A."/>
            <person name="Ferro M.I.T."/>
            <person name="Franco G.R."/>
            <person name="Freitas N.S.A."/>
            <person name="Furlan L.R."/>
            <person name="Gazzinelli R.T."/>
            <person name="Gomes E.A."/>
            <person name="Goncalves P.R."/>
            <person name="Grangeiro T.B."/>
            <person name="Grattapaglia D."/>
            <person name="Grisard E.C."/>
            <person name="Hanna E.S."/>
            <person name="Jardim S.N."/>
            <person name="Laurino J."/>
            <person name="Leoi L.C.T."/>
            <person name="Lima L.F.A."/>
            <person name="Loureiro M.F."/>
            <person name="Lyra M.C.C.P."/>
            <person name="Madeira H.M.F."/>
            <person name="Manfio G.P."/>
            <person name="Maranhao A.Q."/>
            <person name="Martins W.S."/>
            <person name="di Mauro S.M.Z."/>
            <person name="de Medeiros S.R.B."/>
            <person name="Meissner R.V."/>
            <person name="Moreira M.A.M."/>
            <person name="Nascimento F.F."/>
            <person name="Nicolas M.F."/>
            <person name="Oliveira J.G."/>
            <person name="Oliveira S.C."/>
            <person name="Paixao R.F.C."/>
            <person name="Parente J.A."/>
            <person name="Pedrosa F.O."/>
            <person name="Pena S.D.J."/>
            <person name="Pereira J.O."/>
            <person name="Pereira M."/>
            <person name="Pinto L.S.R.C."/>
            <person name="Pinto L.S."/>
            <person name="Porto J.I.R."/>
            <person name="Potrich D.P."/>
            <person name="Ramalho-Neto C.E."/>
            <person name="Reis A.M.M."/>
            <person name="Rigo L.U."/>
            <person name="Rondinelli E."/>
            <person name="Santos E.B.P."/>
            <person name="Santos F.R."/>
            <person name="Schneider M.P.C."/>
            <person name="Seuanez H.N."/>
            <person name="Silva A.M.R."/>
            <person name="da Silva A.L.C."/>
            <person name="Silva D.W."/>
            <person name="Silva R."/>
            <person name="Simoes I.C."/>
            <person name="Simon D."/>
            <person name="Soares C.M.A."/>
            <person name="Soares R.B.A."/>
            <person name="Souza E.M."/>
            <person name="Souza K.R.L."/>
            <person name="Souza R.C."/>
            <person name="Steffens M.B.R."/>
            <person name="Steindel M."/>
            <person name="Teixeira S.R."/>
            <person name="Urmenyi T."/>
            <person name="Vettore A."/>
            <person name="Wassem R."/>
            <person name="Zaha A."/>
            <person name="Simpson A.J.G."/>
        </authorList>
    </citation>
    <scope>NUCLEOTIDE SEQUENCE [LARGE SCALE GENOMIC DNA]</scope>
    <source>
        <strain>ATCC 12472 / DSM 30191 / JCM 1249 / CCUG 213 / NBRC 12614 / NCIMB 9131 / NCTC 9757 / MK</strain>
    </source>
</reference>